<comment type="function">
    <text evidence="1">Allows the formation of correctly charged Asn-tRNA(Asn) or Gln-tRNA(Gln) through the transamidation of misacylated Asp-tRNA(Asn) or Glu-tRNA(Gln) in organisms which lack either or both of asparaginyl-tRNA or glutaminyl-tRNA synthetases. The reaction takes place in the presence of glutamine and ATP through an activated phospho-Asp-tRNA(Asn) or phospho-Glu-tRNA(Gln).</text>
</comment>
<comment type="catalytic activity">
    <reaction evidence="1">
        <text>L-glutamyl-tRNA(Gln) + L-glutamine + ATP + H2O = L-glutaminyl-tRNA(Gln) + L-glutamate + ADP + phosphate + H(+)</text>
        <dbReference type="Rhea" id="RHEA:17521"/>
        <dbReference type="Rhea" id="RHEA-COMP:9681"/>
        <dbReference type="Rhea" id="RHEA-COMP:9684"/>
        <dbReference type="ChEBI" id="CHEBI:15377"/>
        <dbReference type="ChEBI" id="CHEBI:15378"/>
        <dbReference type="ChEBI" id="CHEBI:29985"/>
        <dbReference type="ChEBI" id="CHEBI:30616"/>
        <dbReference type="ChEBI" id="CHEBI:43474"/>
        <dbReference type="ChEBI" id="CHEBI:58359"/>
        <dbReference type="ChEBI" id="CHEBI:78520"/>
        <dbReference type="ChEBI" id="CHEBI:78521"/>
        <dbReference type="ChEBI" id="CHEBI:456216"/>
    </reaction>
</comment>
<comment type="catalytic activity">
    <reaction evidence="1">
        <text>L-aspartyl-tRNA(Asn) + L-glutamine + ATP + H2O = L-asparaginyl-tRNA(Asn) + L-glutamate + ADP + phosphate + 2 H(+)</text>
        <dbReference type="Rhea" id="RHEA:14513"/>
        <dbReference type="Rhea" id="RHEA-COMP:9674"/>
        <dbReference type="Rhea" id="RHEA-COMP:9677"/>
        <dbReference type="ChEBI" id="CHEBI:15377"/>
        <dbReference type="ChEBI" id="CHEBI:15378"/>
        <dbReference type="ChEBI" id="CHEBI:29985"/>
        <dbReference type="ChEBI" id="CHEBI:30616"/>
        <dbReference type="ChEBI" id="CHEBI:43474"/>
        <dbReference type="ChEBI" id="CHEBI:58359"/>
        <dbReference type="ChEBI" id="CHEBI:78515"/>
        <dbReference type="ChEBI" id="CHEBI:78516"/>
        <dbReference type="ChEBI" id="CHEBI:456216"/>
    </reaction>
</comment>
<comment type="subunit">
    <text evidence="1">Heterotrimer of A, B and C subunits.</text>
</comment>
<comment type="similarity">
    <text evidence="1">Belongs to the GatC family.</text>
</comment>
<reference key="1">
    <citation type="journal article" date="2007" name="Proc. Natl. Acad. Sci. U.S.A.">
        <title>Genome plasticity of BCG and impact on vaccine efficacy.</title>
        <authorList>
            <person name="Brosch R."/>
            <person name="Gordon S.V."/>
            <person name="Garnier T."/>
            <person name="Eiglmeier K."/>
            <person name="Frigui W."/>
            <person name="Valenti P."/>
            <person name="Dos Santos S."/>
            <person name="Duthoy S."/>
            <person name="Lacroix C."/>
            <person name="Garcia-Pelayo C."/>
            <person name="Inwald J.K."/>
            <person name="Golby P."/>
            <person name="Garcia J.N."/>
            <person name="Hewinson R.G."/>
            <person name="Behr M.A."/>
            <person name="Quail M.A."/>
            <person name="Churcher C."/>
            <person name="Barrell B.G."/>
            <person name="Parkhill J."/>
            <person name="Cole S.T."/>
        </authorList>
    </citation>
    <scope>NUCLEOTIDE SEQUENCE [LARGE SCALE GENOMIC DNA]</scope>
    <source>
        <strain>BCG / Pasteur 1173P2</strain>
    </source>
</reference>
<sequence length="99" mass="10748">MSQISRDEVAHLARLARLALTETELDSFAGQLDAILTHVSQIQAVDVTGVQATDNPLKDVNVTRPDETVPCLTQRQVLDQAPDAVDGRFAVPQILGDEQ</sequence>
<name>GATC_MYCBP</name>
<gene>
    <name evidence="1" type="primary">gatC</name>
    <name type="ordered locus">BCG_3034c</name>
</gene>
<protein>
    <recommendedName>
        <fullName evidence="1">Aspartyl/glutamyl-tRNA(Asn/Gln) amidotransferase subunit C</fullName>
        <shortName evidence="1">Asp/Glu-ADT subunit C</shortName>
        <ecNumber evidence="1">6.3.5.-</ecNumber>
    </recommendedName>
</protein>
<feature type="chain" id="PRO_1000016150" description="Aspartyl/glutamyl-tRNA(Asn/Gln) amidotransferase subunit C">
    <location>
        <begin position="1"/>
        <end position="99"/>
    </location>
</feature>
<dbReference type="EC" id="6.3.5.-" evidence="1"/>
<dbReference type="EMBL" id="AM408590">
    <property type="protein sequence ID" value="CAL73023.1"/>
    <property type="molecule type" value="Genomic_DNA"/>
</dbReference>
<dbReference type="RefSeq" id="WP_003415256.1">
    <property type="nucleotide sequence ID" value="NC_008769.1"/>
</dbReference>
<dbReference type="SMR" id="A1KN07"/>
<dbReference type="GeneID" id="45427002"/>
<dbReference type="KEGG" id="mbb:BCG_3034c"/>
<dbReference type="HOGENOM" id="CLU_105899_1_0_11"/>
<dbReference type="Proteomes" id="UP000001472">
    <property type="component" value="Chromosome"/>
</dbReference>
<dbReference type="GO" id="GO:0050566">
    <property type="term" value="F:asparaginyl-tRNA synthase (glutamine-hydrolyzing) activity"/>
    <property type="evidence" value="ECO:0007669"/>
    <property type="project" value="RHEA"/>
</dbReference>
<dbReference type="GO" id="GO:0005524">
    <property type="term" value="F:ATP binding"/>
    <property type="evidence" value="ECO:0007669"/>
    <property type="project" value="UniProtKB-KW"/>
</dbReference>
<dbReference type="GO" id="GO:0050567">
    <property type="term" value="F:glutaminyl-tRNA synthase (glutamine-hydrolyzing) activity"/>
    <property type="evidence" value="ECO:0007669"/>
    <property type="project" value="UniProtKB-UniRule"/>
</dbReference>
<dbReference type="GO" id="GO:0070681">
    <property type="term" value="P:glutaminyl-tRNAGln biosynthesis via transamidation"/>
    <property type="evidence" value="ECO:0007669"/>
    <property type="project" value="TreeGrafter"/>
</dbReference>
<dbReference type="GO" id="GO:0006450">
    <property type="term" value="P:regulation of translational fidelity"/>
    <property type="evidence" value="ECO:0007669"/>
    <property type="project" value="InterPro"/>
</dbReference>
<dbReference type="GO" id="GO:0006412">
    <property type="term" value="P:translation"/>
    <property type="evidence" value="ECO:0007669"/>
    <property type="project" value="UniProtKB-UniRule"/>
</dbReference>
<dbReference type="FunFam" id="1.10.20.60:FF:000001">
    <property type="entry name" value="Aspartyl/glutamyl-tRNA(Asn/Gln) amidotransferase subunit C"/>
    <property type="match status" value="1"/>
</dbReference>
<dbReference type="Gene3D" id="1.10.20.60">
    <property type="entry name" value="Glu-tRNAGln amidotransferase C subunit, N-terminal domain"/>
    <property type="match status" value="1"/>
</dbReference>
<dbReference type="HAMAP" id="MF_00122">
    <property type="entry name" value="GatC"/>
    <property type="match status" value="1"/>
</dbReference>
<dbReference type="InterPro" id="IPR036113">
    <property type="entry name" value="Asp/Glu-ADT_sf_sub_c"/>
</dbReference>
<dbReference type="InterPro" id="IPR003837">
    <property type="entry name" value="GatC"/>
</dbReference>
<dbReference type="NCBIfam" id="TIGR00135">
    <property type="entry name" value="gatC"/>
    <property type="match status" value="1"/>
</dbReference>
<dbReference type="PANTHER" id="PTHR15004">
    <property type="entry name" value="GLUTAMYL-TRNA(GLN) AMIDOTRANSFERASE SUBUNIT C, MITOCHONDRIAL"/>
    <property type="match status" value="1"/>
</dbReference>
<dbReference type="PANTHER" id="PTHR15004:SF0">
    <property type="entry name" value="GLUTAMYL-TRNA(GLN) AMIDOTRANSFERASE SUBUNIT C, MITOCHONDRIAL"/>
    <property type="match status" value="1"/>
</dbReference>
<dbReference type="Pfam" id="PF02686">
    <property type="entry name" value="GatC"/>
    <property type="match status" value="1"/>
</dbReference>
<dbReference type="SUPFAM" id="SSF141000">
    <property type="entry name" value="Glu-tRNAGln amidotransferase C subunit"/>
    <property type="match status" value="1"/>
</dbReference>
<proteinExistence type="inferred from homology"/>
<keyword id="KW-0067">ATP-binding</keyword>
<keyword id="KW-0436">Ligase</keyword>
<keyword id="KW-0547">Nucleotide-binding</keyword>
<keyword id="KW-0648">Protein biosynthesis</keyword>
<organism>
    <name type="scientific">Mycobacterium bovis (strain BCG / Pasteur 1173P2)</name>
    <dbReference type="NCBI Taxonomy" id="410289"/>
    <lineage>
        <taxon>Bacteria</taxon>
        <taxon>Bacillati</taxon>
        <taxon>Actinomycetota</taxon>
        <taxon>Actinomycetes</taxon>
        <taxon>Mycobacteriales</taxon>
        <taxon>Mycobacteriaceae</taxon>
        <taxon>Mycobacterium</taxon>
        <taxon>Mycobacterium tuberculosis complex</taxon>
    </lineage>
</organism>
<accession>A1KN07</accession>
<evidence type="ECO:0000255" key="1">
    <source>
        <dbReference type="HAMAP-Rule" id="MF_00122"/>
    </source>
</evidence>